<gene>
    <name evidence="1" type="primary">mutL</name>
    <name type="ordered locus">Teth514_1612</name>
</gene>
<keyword id="KW-0227">DNA damage</keyword>
<keyword id="KW-0234">DNA repair</keyword>
<comment type="function">
    <text evidence="1">This protein is involved in the repair of mismatches in DNA. It is required for dam-dependent methyl-directed DNA mismatch repair. May act as a 'molecular matchmaker', a protein that promotes the formation of a stable complex between two or more DNA-binding proteins in an ATP-dependent manner without itself being part of a final effector complex.</text>
</comment>
<comment type="similarity">
    <text evidence="1">Belongs to the DNA mismatch repair MutL/HexB family.</text>
</comment>
<organism>
    <name type="scientific">Thermoanaerobacter sp. (strain X514)</name>
    <dbReference type="NCBI Taxonomy" id="399726"/>
    <lineage>
        <taxon>Bacteria</taxon>
        <taxon>Bacillati</taxon>
        <taxon>Bacillota</taxon>
        <taxon>Clostridia</taxon>
        <taxon>Thermoanaerobacterales</taxon>
        <taxon>Thermoanaerobacteraceae</taxon>
        <taxon>Thermoanaerobacter</taxon>
    </lineage>
</organism>
<evidence type="ECO:0000255" key="1">
    <source>
        <dbReference type="HAMAP-Rule" id="MF_00149"/>
    </source>
</evidence>
<protein>
    <recommendedName>
        <fullName evidence="1">DNA mismatch repair protein MutL</fullName>
    </recommendedName>
</protein>
<proteinExistence type="inferred from homology"/>
<name>MUTL_THEPX</name>
<feature type="chain" id="PRO_1000096696" description="DNA mismatch repair protein MutL">
    <location>
        <begin position="1"/>
        <end position="614"/>
    </location>
</feature>
<accession>B0K1A3</accession>
<sequence>MNKIHLLDEKTINKISAGEVVERPASIVKELIENSIDAGSKNITVEILEGGIPYIKVSDDGCGMNEIDAILAFERHATSKIKSDNDLYSIGTLGFRGEALASIAAVSHVTLQTKEEGALFGTKVVVEGGKVVEKTTCGCAKGCSIEVRDVFFNTPARRKFLKRPSTESMYIIDVVTKLCLSHPEVSFKYVKDRKLQFITSGNGNIEDVILRLFGNEVYSSLMSASFESEDLKLKILAGKNSLNYSNRNMQFFYVNGRYVKNKTLSAAVDEAFKTYIPVNRYPAVFLYMEIDPRQIDVNIHPSKLEIKFSDERRIFEAVYKTIKDSLHKYNLIPEVKIEEKKNIFEIETPTISAEQTKLYLTSSDKELEEEKKKFDNEFKGKNVFLKDNVLKENSKNSSLDNHLAVYEEYEHEKEEINKNDLAKKISDIRIVGTLFSTYIIVEKEDVFYIIDQHAAHERILYEKFTSQYEKIQTRQVTFPIVVELQPRDLELVHQEKELLNKLGYVFEEFGNNCIILREVPVILGQPEARQLFIDIVEKLKDKELINKISLKEENIIMMACKAAVKAMDNLSEKEIHKLFDDLKITENPYTCPHGRPVIIAITKTQLEKMFKRIM</sequence>
<reference key="1">
    <citation type="submission" date="2008-01" db="EMBL/GenBank/DDBJ databases">
        <title>Complete sequence of Thermoanaerobacter sp. X514.</title>
        <authorList>
            <consortium name="US DOE Joint Genome Institute"/>
            <person name="Copeland A."/>
            <person name="Lucas S."/>
            <person name="Lapidus A."/>
            <person name="Barry K."/>
            <person name="Glavina del Rio T."/>
            <person name="Dalin E."/>
            <person name="Tice H."/>
            <person name="Pitluck S."/>
            <person name="Bruce D."/>
            <person name="Goodwin L."/>
            <person name="Saunders E."/>
            <person name="Brettin T."/>
            <person name="Detter J.C."/>
            <person name="Han C."/>
            <person name="Schmutz J."/>
            <person name="Larimer F."/>
            <person name="Land M."/>
            <person name="Hauser L."/>
            <person name="Kyrpides N."/>
            <person name="Kim E."/>
            <person name="Hemme C."/>
            <person name="Fields M.W."/>
            <person name="He Z."/>
            <person name="Zhou J."/>
            <person name="Richardson P."/>
        </authorList>
    </citation>
    <scope>NUCLEOTIDE SEQUENCE [LARGE SCALE GENOMIC DNA]</scope>
    <source>
        <strain>X514</strain>
    </source>
</reference>
<dbReference type="EMBL" id="CP000923">
    <property type="protein sequence ID" value="ABY92898.1"/>
    <property type="molecule type" value="Genomic_DNA"/>
</dbReference>
<dbReference type="RefSeq" id="WP_009052377.1">
    <property type="nucleotide sequence ID" value="NC_010320.1"/>
</dbReference>
<dbReference type="SMR" id="B0K1A3"/>
<dbReference type="KEGG" id="tex:Teth514_1612"/>
<dbReference type="HOGENOM" id="CLU_004131_4_1_9"/>
<dbReference type="Proteomes" id="UP000002155">
    <property type="component" value="Chromosome"/>
</dbReference>
<dbReference type="GO" id="GO:0032300">
    <property type="term" value="C:mismatch repair complex"/>
    <property type="evidence" value="ECO:0007669"/>
    <property type="project" value="InterPro"/>
</dbReference>
<dbReference type="GO" id="GO:0005524">
    <property type="term" value="F:ATP binding"/>
    <property type="evidence" value="ECO:0007669"/>
    <property type="project" value="InterPro"/>
</dbReference>
<dbReference type="GO" id="GO:0016887">
    <property type="term" value="F:ATP hydrolysis activity"/>
    <property type="evidence" value="ECO:0007669"/>
    <property type="project" value="InterPro"/>
</dbReference>
<dbReference type="GO" id="GO:0140664">
    <property type="term" value="F:ATP-dependent DNA damage sensor activity"/>
    <property type="evidence" value="ECO:0007669"/>
    <property type="project" value="InterPro"/>
</dbReference>
<dbReference type="GO" id="GO:0030983">
    <property type="term" value="F:mismatched DNA binding"/>
    <property type="evidence" value="ECO:0007669"/>
    <property type="project" value="InterPro"/>
</dbReference>
<dbReference type="GO" id="GO:0006298">
    <property type="term" value="P:mismatch repair"/>
    <property type="evidence" value="ECO:0007669"/>
    <property type="project" value="UniProtKB-UniRule"/>
</dbReference>
<dbReference type="CDD" id="cd16926">
    <property type="entry name" value="HATPase_MutL-MLH-PMS-like"/>
    <property type="match status" value="1"/>
</dbReference>
<dbReference type="CDD" id="cd00782">
    <property type="entry name" value="MutL_Trans"/>
    <property type="match status" value="1"/>
</dbReference>
<dbReference type="FunFam" id="3.30.565.10:FF:000003">
    <property type="entry name" value="DNA mismatch repair endonuclease MutL"/>
    <property type="match status" value="1"/>
</dbReference>
<dbReference type="Gene3D" id="3.30.230.10">
    <property type="match status" value="1"/>
</dbReference>
<dbReference type="Gene3D" id="3.30.565.10">
    <property type="entry name" value="Histidine kinase-like ATPase, C-terminal domain"/>
    <property type="match status" value="1"/>
</dbReference>
<dbReference type="Gene3D" id="3.30.1540.20">
    <property type="entry name" value="MutL, C-terminal domain, dimerisation subdomain"/>
    <property type="match status" value="1"/>
</dbReference>
<dbReference type="Gene3D" id="3.30.1370.100">
    <property type="entry name" value="MutL, C-terminal domain, regulatory subdomain"/>
    <property type="match status" value="1"/>
</dbReference>
<dbReference type="HAMAP" id="MF_00149">
    <property type="entry name" value="DNA_mis_repair"/>
    <property type="match status" value="1"/>
</dbReference>
<dbReference type="InterPro" id="IPR014762">
    <property type="entry name" value="DNA_mismatch_repair_CS"/>
</dbReference>
<dbReference type="InterPro" id="IPR020667">
    <property type="entry name" value="DNA_mismatch_repair_MutL"/>
</dbReference>
<dbReference type="InterPro" id="IPR013507">
    <property type="entry name" value="DNA_mismatch_S5_2-like"/>
</dbReference>
<dbReference type="InterPro" id="IPR036890">
    <property type="entry name" value="HATPase_C_sf"/>
</dbReference>
<dbReference type="InterPro" id="IPR002099">
    <property type="entry name" value="MutL/Mlh/PMS"/>
</dbReference>
<dbReference type="InterPro" id="IPR038973">
    <property type="entry name" value="MutL/Mlh/Pms-like"/>
</dbReference>
<dbReference type="InterPro" id="IPR014790">
    <property type="entry name" value="MutL_C"/>
</dbReference>
<dbReference type="InterPro" id="IPR042120">
    <property type="entry name" value="MutL_C_dimsub"/>
</dbReference>
<dbReference type="InterPro" id="IPR042121">
    <property type="entry name" value="MutL_C_regsub"/>
</dbReference>
<dbReference type="InterPro" id="IPR037198">
    <property type="entry name" value="MutL_C_sf"/>
</dbReference>
<dbReference type="InterPro" id="IPR020568">
    <property type="entry name" value="Ribosomal_Su5_D2-typ_SF"/>
</dbReference>
<dbReference type="InterPro" id="IPR014721">
    <property type="entry name" value="Ribsml_uS5_D2-typ_fold_subgr"/>
</dbReference>
<dbReference type="NCBIfam" id="TIGR00585">
    <property type="entry name" value="mutl"/>
    <property type="match status" value="1"/>
</dbReference>
<dbReference type="PANTHER" id="PTHR10073">
    <property type="entry name" value="DNA MISMATCH REPAIR PROTEIN MLH, PMS, MUTL"/>
    <property type="match status" value="1"/>
</dbReference>
<dbReference type="PANTHER" id="PTHR10073:SF12">
    <property type="entry name" value="DNA MISMATCH REPAIR PROTEIN MLH1"/>
    <property type="match status" value="1"/>
</dbReference>
<dbReference type="Pfam" id="PF01119">
    <property type="entry name" value="DNA_mis_repair"/>
    <property type="match status" value="1"/>
</dbReference>
<dbReference type="Pfam" id="PF13589">
    <property type="entry name" value="HATPase_c_3"/>
    <property type="match status" value="1"/>
</dbReference>
<dbReference type="Pfam" id="PF08676">
    <property type="entry name" value="MutL_C"/>
    <property type="match status" value="1"/>
</dbReference>
<dbReference type="SMART" id="SM01340">
    <property type="entry name" value="DNA_mis_repair"/>
    <property type="match status" value="1"/>
</dbReference>
<dbReference type="SMART" id="SM00853">
    <property type="entry name" value="MutL_C"/>
    <property type="match status" value="1"/>
</dbReference>
<dbReference type="SUPFAM" id="SSF55874">
    <property type="entry name" value="ATPase domain of HSP90 chaperone/DNA topoisomerase II/histidine kinase"/>
    <property type="match status" value="1"/>
</dbReference>
<dbReference type="SUPFAM" id="SSF118116">
    <property type="entry name" value="DNA mismatch repair protein MutL"/>
    <property type="match status" value="1"/>
</dbReference>
<dbReference type="SUPFAM" id="SSF54211">
    <property type="entry name" value="Ribosomal protein S5 domain 2-like"/>
    <property type="match status" value="1"/>
</dbReference>
<dbReference type="PROSITE" id="PS00058">
    <property type="entry name" value="DNA_MISMATCH_REPAIR_1"/>
    <property type="match status" value="1"/>
</dbReference>